<comment type="function">
    <text evidence="2 3">Mitochondrial membrane ATP synthase (F(1)F(0) ATP synthase or Complex V) produces ATP from ADP in the presence of a proton gradient across the membrane which is generated by electron transport complexes of the respiratory chain (PubMed:25759169). F-type ATP synthases consist of two structural domains, F(1) - containing the extramembraneous catalytic core, and F(0) - containing the membrane proton channel, linked together by a central stalk and a peripheral stalk (PubMed:27373333). During catalysis, ATP synthesis in the catalytic domain of F(1) is coupled via a rotary mechanism of the central stalk subunits to proton translocation (PubMed:27373333). Part of the complex F(0) domain (PubMed:27373333). Minor subunit located with subunit a/ATP6 in the membrane (PubMed:27373333). Together with subunit e/TIM11, probably contributes to membrane curvature at the site of the ATP synthase dimer, ultimately contributing to formation of cristae (PubMed:27373333).</text>
</comment>
<comment type="subunit">
    <text evidence="2 3">F-type ATP synthases have 2 components, the catalytic core F(1) and the membrane-embedded component F(0), linked together by a central stalk and a peripheral stalk (PubMed:27373333). The central stalk, also called rotor shaft, is often seen as part of F(1) (PubMed:27373333). The peripheral stalk is seen as part of F(0) (PubMed:27373333). F(0) contains the membrane channel next to the rotor (PubMed:27373333). F-type ATP synthases form dimers but each monomer functions independently in ATP generation (PubMed:27373333). The dimer consists of 17 different polypeptides: ATP1 (subunit alpha, 3 molecules per monomer, part of F(1)), ATP2 (subunit beta, 3 copies per monomer, part of F(1)), ATP3 (subunit gamma, part of the central stalk), ATP4 (subunit b, part of the peripheral stalk), ATP5/OSCP (subunit 5/OSCP, part of the peripheral stalk), ATP6 (subunit a, part of the peripheral stalk), ATP7 (subunit d, part of the peripheral stalk), ATP8 (subunit 8, part of the peripheral stalk), OLI1 (subunit c, part of the rotor, 10 molecules per monomer), ATP14 (subunit h, part of the peripheral stalk), ATP15 (subunit epsilon, part of the central stalk), ATP16 (subunit delta, part of the central stalk), ATP17 (subunit f, part of the peripheral stalk), ATP18 (subunit i/j, part of the peripheral stalk), ATP19 (subunit k, dimer-specific, at interface between monomers), ATP20 (subunit g, at interface between monomers), TIM11 (subunit e, at interface between monomers) (PubMed:25759169, PubMed:27373333).</text>
</comment>
<comment type="subcellular location">
    <subcellularLocation>
        <location evidence="6">Mitochondrion inner membrane</location>
    </subcellularLocation>
    <text evidence="6">The F-type ATP synthase complex is anchored in the mitochondrial inner membrane via the F(0) domain with the F(1) domain and the peripheral stalk extending into the mitochondrial matrix.</text>
</comment>
<comment type="similarity">
    <text evidence="5">Belongs to the ATPase g subunit family.</text>
</comment>
<reference evidence="8" key="1">
    <citation type="journal article" date="2004" name="Nature">
        <title>Genome evolution in yeasts.</title>
        <authorList>
            <person name="Dujon B."/>
            <person name="Sherman D."/>
            <person name="Fischer G."/>
            <person name="Durrens P."/>
            <person name="Casaregola S."/>
            <person name="Lafontaine I."/>
            <person name="de Montigny J."/>
            <person name="Marck C."/>
            <person name="Neuveglise C."/>
            <person name="Talla E."/>
            <person name="Goffard N."/>
            <person name="Frangeul L."/>
            <person name="Aigle M."/>
            <person name="Anthouard V."/>
            <person name="Babour A."/>
            <person name="Barbe V."/>
            <person name="Barnay S."/>
            <person name="Blanchin S."/>
            <person name="Beckerich J.-M."/>
            <person name="Beyne E."/>
            <person name="Bleykasten C."/>
            <person name="Boisrame A."/>
            <person name="Boyer J."/>
            <person name="Cattolico L."/>
            <person name="Confanioleri F."/>
            <person name="de Daruvar A."/>
            <person name="Despons L."/>
            <person name="Fabre E."/>
            <person name="Fairhead C."/>
            <person name="Ferry-Dumazet H."/>
            <person name="Groppi A."/>
            <person name="Hantraye F."/>
            <person name="Hennequin C."/>
            <person name="Jauniaux N."/>
            <person name="Joyet P."/>
            <person name="Kachouri R."/>
            <person name="Kerrest A."/>
            <person name="Koszul R."/>
            <person name="Lemaire M."/>
            <person name="Lesur I."/>
            <person name="Ma L."/>
            <person name="Muller H."/>
            <person name="Nicaud J.-M."/>
            <person name="Nikolski M."/>
            <person name="Oztas S."/>
            <person name="Ozier-Kalogeropoulos O."/>
            <person name="Pellenz S."/>
            <person name="Potier S."/>
            <person name="Richard G.-F."/>
            <person name="Straub M.-L."/>
            <person name="Suleau A."/>
            <person name="Swennen D."/>
            <person name="Tekaia F."/>
            <person name="Wesolowski-Louvel M."/>
            <person name="Westhof E."/>
            <person name="Wirth B."/>
            <person name="Zeniou-Meyer M."/>
            <person name="Zivanovic Y."/>
            <person name="Bolotin-Fukuhara M."/>
            <person name="Thierry A."/>
            <person name="Bouchier C."/>
            <person name="Caudron B."/>
            <person name="Scarpelli C."/>
            <person name="Gaillardin C."/>
            <person name="Weissenbach J."/>
            <person name="Wincker P."/>
            <person name="Souciet J.-L."/>
        </authorList>
    </citation>
    <scope>NUCLEOTIDE SEQUENCE [LARGE SCALE GENOMIC DNA]</scope>
    <source>
        <strain>CLIB 122 / E 150</strain>
    </source>
</reference>
<reference evidence="5" key="2">
    <citation type="journal article" date="2015" name="Biochem. J.">
        <title>The purification and characterization of ATP synthase complexes from the mitochondria of four fungal species.</title>
        <authorList>
            <person name="Liu S."/>
            <person name="Charlesworth T.J."/>
            <person name="Bason J.V."/>
            <person name="Montgomery M.G."/>
            <person name="Harbour M.E."/>
            <person name="Fearnley I.M."/>
            <person name="Walker J.E."/>
        </authorList>
    </citation>
    <scope>FUNCTION OF ATP SYNTHASE COMPLEX</scope>
    <source>
        <strain evidence="4">CLIB 122 / E 150</strain>
    </source>
</reference>
<reference evidence="5" key="3">
    <citation type="journal article" date="2016" name="Mol. Cell">
        <title>Structure of a Complete ATP Synthase Dimer Reveals the Molecular Basis of Inner Mitochondrial Membrane Morphology.</title>
        <authorList>
            <person name="Hahn A."/>
            <person name="Parey K."/>
            <person name="Bublitz M."/>
            <person name="Mills D.J."/>
            <person name="Zickermann V."/>
            <person name="Vonck J."/>
            <person name="Kuehlbrandt W."/>
            <person name="Meier T."/>
        </authorList>
    </citation>
    <scope>STRUCTURE BY ELECTRON MICROSCOPY (7.7 ANGSTROMS) OF DIMERIC ATP SYNTHASE COMPLEX</scope>
    <scope>FUNCTION</scope>
    <scope>SUBUNIT</scope>
    <scope>SUBCELLULAR LOCATION</scope>
    <scope>IDENTIFICATION BY MASS SPECTROMETRY</scope>
</reference>
<accession>B5FVB8</accession>
<keyword id="KW-0066">ATP synthesis</keyword>
<keyword id="KW-0138">CF(0)</keyword>
<keyword id="KW-0375">Hydrogen ion transport</keyword>
<keyword id="KW-0406">Ion transport</keyword>
<keyword id="KW-0472">Membrane</keyword>
<keyword id="KW-0496">Mitochondrion</keyword>
<keyword id="KW-0999">Mitochondrion inner membrane</keyword>
<keyword id="KW-1185">Reference proteome</keyword>
<keyword id="KW-0813">Transport</keyword>
<gene>
    <name evidence="1" type="primary">ATP20</name>
    <name evidence="7" type="ordered locus">YALI0_B21527g</name>
</gene>
<name>ATPN_YARLI</name>
<organism evidence="8">
    <name type="scientific">Yarrowia lipolytica (strain CLIB 122 / E 150)</name>
    <name type="common">Yeast</name>
    <name type="synonym">Candida lipolytica</name>
    <dbReference type="NCBI Taxonomy" id="284591"/>
    <lineage>
        <taxon>Eukaryota</taxon>
        <taxon>Fungi</taxon>
        <taxon>Dikarya</taxon>
        <taxon>Ascomycota</taxon>
        <taxon>Saccharomycotina</taxon>
        <taxon>Dipodascomycetes</taxon>
        <taxon>Dipodascales</taxon>
        <taxon>Dipodascales incertae sedis</taxon>
        <taxon>Yarrowia</taxon>
    </lineage>
</organism>
<sequence>MFRSRVSGVFQQVRFQSTAASKAASKAQGLGAKVQGITNCAVYWAKVTGELGKQIYLKEGFAPPSLSQFQSVYQNLFNSVKSYALKPQKVIDCAESITKTDALRYTAYGVQILGLFTLGEVIGRRNVIGYKVPSADKH</sequence>
<proteinExistence type="evidence at protein level"/>
<dbReference type="EMBL" id="CR382128">
    <property type="protein sequence ID" value="CAR64289.1"/>
    <property type="molecule type" value="Genomic_DNA"/>
</dbReference>
<dbReference type="RefSeq" id="XP_002143021.1">
    <property type="nucleotide sequence ID" value="XM_002142985.1"/>
</dbReference>
<dbReference type="FunCoup" id="B5FVB8">
    <property type="interactions" value="104"/>
</dbReference>
<dbReference type="STRING" id="284591.B5FVB8"/>
<dbReference type="EnsemblFungi" id="CAR64289">
    <property type="protein sequence ID" value="CAR64289"/>
    <property type="gene ID" value="YALI0_B21527g"/>
</dbReference>
<dbReference type="KEGG" id="yli:7009423"/>
<dbReference type="VEuPathDB" id="FungiDB:YALI0_B21527g"/>
<dbReference type="HOGENOM" id="CLU_083674_1_0_1"/>
<dbReference type="InParanoid" id="B5FVB8"/>
<dbReference type="OMA" id="CAQAYLN"/>
<dbReference type="OrthoDB" id="120121at4891"/>
<dbReference type="Proteomes" id="UP000001300">
    <property type="component" value="Chromosome B"/>
</dbReference>
<dbReference type="GO" id="GO:0005743">
    <property type="term" value="C:mitochondrial inner membrane"/>
    <property type="evidence" value="ECO:0007669"/>
    <property type="project" value="UniProtKB-SubCell"/>
</dbReference>
<dbReference type="GO" id="GO:0045259">
    <property type="term" value="C:proton-transporting ATP synthase complex"/>
    <property type="evidence" value="ECO:0007669"/>
    <property type="project" value="UniProtKB-KW"/>
</dbReference>
<dbReference type="GO" id="GO:0046933">
    <property type="term" value="F:proton-transporting ATP synthase activity, rotational mechanism"/>
    <property type="evidence" value="ECO:0007669"/>
    <property type="project" value="EnsemblFungi"/>
</dbReference>
<dbReference type="GO" id="GO:0042407">
    <property type="term" value="P:cristae formation"/>
    <property type="evidence" value="ECO:0007669"/>
    <property type="project" value="EnsemblFungi"/>
</dbReference>
<dbReference type="GO" id="GO:0065003">
    <property type="term" value="P:protein-containing complex assembly"/>
    <property type="evidence" value="ECO:0007669"/>
    <property type="project" value="EnsemblFungi"/>
</dbReference>
<dbReference type="GO" id="GO:0015986">
    <property type="term" value="P:proton motive force-driven ATP synthesis"/>
    <property type="evidence" value="ECO:0000318"/>
    <property type="project" value="GO_Central"/>
</dbReference>
<dbReference type="InterPro" id="IPR006808">
    <property type="entry name" value="ATP_synth_F0_gsu_mt"/>
</dbReference>
<dbReference type="Pfam" id="PF04718">
    <property type="entry name" value="ATP-synt_G"/>
    <property type="match status" value="1"/>
</dbReference>
<evidence type="ECO:0000250" key="1">
    <source>
        <dbReference type="UniProtKB" id="Q12233"/>
    </source>
</evidence>
<evidence type="ECO:0000269" key="2">
    <source>
    </source>
</evidence>
<evidence type="ECO:0000269" key="3">
    <source>
    </source>
</evidence>
<evidence type="ECO:0000303" key="4">
    <source>
    </source>
</evidence>
<evidence type="ECO:0000305" key="5"/>
<evidence type="ECO:0000305" key="6">
    <source>
    </source>
</evidence>
<evidence type="ECO:0000312" key="7">
    <source>
        <dbReference type="EMBL" id="CAR64289.1"/>
    </source>
</evidence>
<evidence type="ECO:0000312" key="8">
    <source>
        <dbReference type="Proteomes" id="UP000001300"/>
    </source>
</evidence>
<feature type="chain" id="PRO_0000445324" description="ATP synthase subunit g, mitochondrial" evidence="5">
    <location>
        <begin position="1"/>
        <end position="138"/>
    </location>
</feature>
<protein>
    <recommendedName>
        <fullName evidence="1">ATP synthase subunit g, mitochondrial</fullName>
        <shortName evidence="1">ATPase subunit g</shortName>
    </recommendedName>
</protein>